<protein>
    <recommendedName>
        <fullName>Testis-specific serine kinase substrate</fullName>
        <shortName>Testis-specific kinase substrate</shortName>
    </recommendedName>
    <alternativeName>
        <fullName>STK22 substrate 1</fullName>
    </alternativeName>
</protein>
<keyword id="KW-0025">Alternative splicing</keyword>
<keyword id="KW-0963">Cytoplasm</keyword>
<keyword id="KW-0206">Cytoskeleton</keyword>
<keyword id="KW-0597">Phosphoprotein</keyword>
<keyword id="KW-1267">Proteomics identification</keyword>
<keyword id="KW-1185">Reference proteome</keyword>
<evidence type="ECO:0000250" key="1">
    <source>
        <dbReference type="UniProtKB" id="O54887"/>
    </source>
</evidence>
<evidence type="ECO:0000250" key="2">
    <source>
        <dbReference type="UniProtKB" id="P60531"/>
    </source>
</evidence>
<evidence type="ECO:0000256" key="3">
    <source>
        <dbReference type="SAM" id="MobiDB-lite"/>
    </source>
</evidence>
<evidence type="ECO:0000269" key="4">
    <source>
    </source>
</evidence>
<evidence type="ECO:0000269" key="5">
    <source>
    </source>
</evidence>
<evidence type="ECO:0000269" key="6">
    <source>
    </source>
</evidence>
<evidence type="ECO:0000269" key="7">
    <source>
    </source>
</evidence>
<evidence type="ECO:0000305" key="8"/>
<dbReference type="EMBL" id="AF200923">
    <property type="protein sequence ID" value="AAF12819.3"/>
    <property type="molecule type" value="Genomic_DNA"/>
</dbReference>
<dbReference type="EMBL" id="AF411384">
    <property type="protein sequence ID" value="AAL60464.1"/>
    <property type="molecule type" value="mRNA"/>
</dbReference>
<dbReference type="EMBL" id="BC058862">
    <property type="protein sequence ID" value="AAH58862.1"/>
    <property type="molecule type" value="mRNA"/>
</dbReference>
<dbReference type="CCDS" id="CCDS12780.1">
    <molecule id="Q9UJT2-1"/>
</dbReference>
<dbReference type="PIR" id="JC7709">
    <property type="entry name" value="JC7709"/>
</dbReference>
<dbReference type="RefSeq" id="NP_068379.1">
    <molecule id="Q9UJT2-1"/>
    <property type="nucleotide sequence ID" value="NM_021733.2"/>
</dbReference>
<dbReference type="SMR" id="Q9UJT2"/>
<dbReference type="BioGRID" id="121902">
    <property type="interactions" value="43"/>
</dbReference>
<dbReference type="FunCoup" id="Q9UJT2">
    <property type="interactions" value="26"/>
</dbReference>
<dbReference type="IntAct" id="Q9UJT2">
    <property type="interactions" value="38"/>
</dbReference>
<dbReference type="STRING" id="9606.ENSP00000246801"/>
<dbReference type="iPTMnet" id="Q9UJT2"/>
<dbReference type="PhosphoSitePlus" id="Q9UJT2"/>
<dbReference type="BioMuta" id="TSKS"/>
<dbReference type="DMDM" id="44888550"/>
<dbReference type="jPOST" id="Q9UJT2"/>
<dbReference type="MassIVE" id="Q9UJT2"/>
<dbReference type="PaxDb" id="9606-ENSP00000246801"/>
<dbReference type="PeptideAtlas" id="Q9UJT2"/>
<dbReference type="ProteomicsDB" id="84647">
    <molecule id="Q9UJT2-1"/>
</dbReference>
<dbReference type="ProteomicsDB" id="84648">
    <molecule id="Q9UJT2-2"/>
</dbReference>
<dbReference type="Antibodypedia" id="18691">
    <property type="antibodies" value="119 antibodies from 19 providers"/>
</dbReference>
<dbReference type="DNASU" id="60385"/>
<dbReference type="Ensembl" id="ENST00000246801.8">
    <molecule id="Q9UJT2-1"/>
    <property type="protein sequence ID" value="ENSP00000246801.2"/>
    <property type="gene ID" value="ENSG00000126467.11"/>
</dbReference>
<dbReference type="GeneID" id="60385"/>
<dbReference type="KEGG" id="hsa:60385"/>
<dbReference type="MANE-Select" id="ENST00000246801.8">
    <property type="protein sequence ID" value="ENSP00000246801.2"/>
    <property type="RefSeq nucleotide sequence ID" value="NM_021733.2"/>
    <property type="RefSeq protein sequence ID" value="NP_068379.1"/>
</dbReference>
<dbReference type="UCSC" id="uc002ppm.4">
    <molecule id="Q9UJT2-1"/>
    <property type="organism name" value="human"/>
</dbReference>
<dbReference type="AGR" id="HGNC:30719"/>
<dbReference type="CTD" id="60385"/>
<dbReference type="DisGeNET" id="60385"/>
<dbReference type="GeneCards" id="TSKS"/>
<dbReference type="HGNC" id="HGNC:30719">
    <property type="gene designation" value="TSKS"/>
</dbReference>
<dbReference type="HPA" id="ENSG00000126467">
    <property type="expression patterns" value="Tissue enriched (testis)"/>
</dbReference>
<dbReference type="MIM" id="608253">
    <property type="type" value="gene"/>
</dbReference>
<dbReference type="neXtProt" id="NX_Q9UJT2"/>
<dbReference type="OpenTargets" id="ENSG00000126467"/>
<dbReference type="PharmGKB" id="PA164727339"/>
<dbReference type="VEuPathDB" id="HostDB:ENSG00000126467"/>
<dbReference type="eggNOG" id="ENOG502RT0F">
    <property type="taxonomic scope" value="Eukaryota"/>
</dbReference>
<dbReference type="GeneTree" id="ENSGT00390000002611"/>
<dbReference type="HOGENOM" id="CLU_033722_0_0_1"/>
<dbReference type="InParanoid" id="Q9UJT2"/>
<dbReference type="OMA" id="ENCWMVT"/>
<dbReference type="OrthoDB" id="9424665at2759"/>
<dbReference type="PAN-GO" id="Q9UJT2">
    <property type="GO annotations" value="2 GO annotations based on evolutionary models"/>
</dbReference>
<dbReference type="PhylomeDB" id="Q9UJT2"/>
<dbReference type="TreeFam" id="TF337594"/>
<dbReference type="PathwayCommons" id="Q9UJT2"/>
<dbReference type="SignaLink" id="Q9UJT2"/>
<dbReference type="BioGRID-ORCS" id="60385">
    <property type="hits" value="13 hits in 1166 CRISPR screens"/>
</dbReference>
<dbReference type="CD-CODE" id="8C2F96ED">
    <property type="entry name" value="Centrosome"/>
</dbReference>
<dbReference type="GenomeRNAi" id="60385"/>
<dbReference type="Pharos" id="Q9UJT2">
    <property type="development level" value="Tbio"/>
</dbReference>
<dbReference type="PRO" id="PR:Q9UJT2"/>
<dbReference type="Proteomes" id="UP000005640">
    <property type="component" value="Chromosome 19"/>
</dbReference>
<dbReference type="RNAct" id="Q9UJT2">
    <property type="molecule type" value="protein"/>
</dbReference>
<dbReference type="Bgee" id="ENSG00000126467">
    <property type="expression patterns" value="Expressed in right testis and 111 other cell types or tissues"/>
</dbReference>
<dbReference type="ExpressionAtlas" id="Q9UJT2">
    <property type="expression patterns" value="baseline and differential"/>
</dbReference>
<dbReference type="GO" id="GO:0005814">
    <property type="term" value="C:centriole"/>
    <property type="evidence" value="ECO:0000314"/>
    <property type="project" value="UniProtKB"/>
</dbReference>
<dbReference type="GO" id="GO:0005737">
    <property type="term" value="C:cytoplasm"/>
    <property type="evidence" value="ECO:0007669"/>
    <property type="project" value="UniProtKB-KW"/>
</dbReference>
<dbReference type="GO" id="GO:0019901">
    <property type="term" value="F:protein kinase binding"/>
    <property type="evidence" value="ECO:0000353"/>
    <property type="project" value="UniProtKB"/>
</dbReference>
<dbReference type="InterPro" id="IPR028214">
    <property type="entry name" value="TSKS"/>
</dbReference>
<dbReference type="PANTHER" id="PTHR14351">
    <property type="entry name" value="TESTIS-SPECIFIC SERINE KINASE SUBSTRATE"/>
    <property type="match status" value="1"/>
</dbReference>
<dbReference type="PANTHER" id="PTHR14351:SF1">
    <property type="entry name" value="TESTIS-SPECIFIC SERINE KINASE SUBSTRATE"/>
    <property type="match status" value="1"/>
</dbReference>
<dbReference type="Pfam" id="PF15358">
    <property type="entry name" value="TSKS"/>
    <property type="match status" value="1"/>
</dbReference>
<sequence>MASVVVKTIWQSKEIHEAGDTPTGVESCSQLVPEAPRRVTSRAKGIPKKKKAVSFHGVEPQMSHQPMHWCLNLKRSSACTNVSLLNLAAMEPTDSTGTDSTVEDLSGQLTLAGPPASPTLPWDPDDADITEILSGVNSGLVRAKDSITSLKEKTNRVNQHVQSLQSECSVLSENLERRRQEAEELEGYCIQLKENCWKVTRSVEDAEIKTNVLKQNSALLEEKLRYLQQQLQDETPRRQEAELQEPEEKQEPEEKQEPEEKQKPEAGLSWNSLGPAATSQGCPGPPGSPDKPSRPHGLVPAGWGMGPRAGEGPYVSEQELQKLFTGIEELRREVSSLTARWHQEEGAVQEALRLLGGLGGRVDGFLGQWERAQREQAQTARDLQELRGRADELCTMVERSAVSVASLRSELEGLGPLKPILEEFGRQFQNSRRGPDLSMNLDRSHQGNCARCASQGSQLSTESLQQLLDRALTSLVDEVKQRGLTPACPSCQRLHKKILELERQALAKHVRAEALSSTLRLAQDEALRAKNLLLTDKMKPEEKMATLDHLHLKMCSLHDHLSNLPLEGSTGTMGGGSSAGTPPKQGGSAPEQ</sequence>
<comment type="function">
    <text>May play a role in testicular physiology, most probably in the process of spermatogenesis or spermatid development.</text>
</comment>
<comment type="interaction">
    <interactant intactId="EBI-852101">
        <id>Q9UJT2</id>
    </interactant>
    <interactant intactId="EBI-3044087">
        <id>Q7Z3Y8</id>
        <label>KRT27</label>
    </interactant>
    <organismsDiffer>false</organismsDiffer>
    <experiments>3</experiments>
</comment>
<comment type="interaction">
    <interactant intactId="EBI-852101">
        <id>Q9UJT2</id>
    </interactant>
    <interactant intactId="EBI-355607">
        <id>P06753</id>
        <label>TPM3</label>
    </interactant>
    <organismsDiffer>false</organismsDiffer>
    <experiments>3</experiments>
</comment>
<comment type="interaction">
    <interactant intactId="EBI-852101">
        <id>Q9UJT2</id>
    </interactant>
    <interactant intactId="EBI-6423734">
        <id>Q9BXA7</id>
        <label>TSSK1B</label>
    </interactant>
    <organismsDiffer>false</organismsDiffer>
    <experiments>3</experiments>
</comment>
<comment type="interaction">
    <interactant intactId="EBI-852101">
        <id>Q9UJT2</id>
    </interactant>
    <interactant intactId="EBI-852089">
        <id>Q96PF2</id>
        <label>TSSK2</label>
    </interactant>
    <organismsDiffer>false</organismsDiffer>
    <experiments>9</experiments>
</comment>
<comment type="interaction">
    <interactant intactId="EBI-852113">
        <id>Q9UJT2-2</id>
    </interactant>
    <interactant intactId="EBI-852089">
        <id>Q96PF2</id>
        <label>TSSK2</label>
    </interactant>
    <organismsDiffer>false</organismsDiffer>
    <experiments>2</experiments>
</comment>
<comment type="subcellular location">
    <subcellularLocation>
        <location evidence="7">Cytoplasm</location>
        <location evidence="7">Cytoskeleton</location>
        <location evidence="7">Microtubule organizing center</location>
        <location evidence="7">Centrosome</location>
        <location evidence="7">Centriole</location>
    </subcellularLocation>
    <text>Concentrates in spermatid centrioles during flagellogenesis.</text>
</comment>
<comment type="alternative products">
    <event type="alternative splicing"/>
    <isoform>
        <id>Q9UJT2-1</id>
        <name>1</name>
        <sequence type="displayed"/>
    </isoform>
    <isoform>
        <id>Q9UJT2-2</id>
        <name>2</name>
        <sequence type="described" ref="VSP_009591 VSP_009592 VSP_009593"/>
    </isoform>
</comment>
<comment type="tissue specificity">
    <text evidence="4 5">Highly expressed in testis. Expressed at low levels in prostate, female breast, placenta, ovary and thymus.</text>
</comment>
<comment type="PTM">
    <text evidence="5">Phosphorylated on serine residue(s) by STK22A/TSSK1 and STK22B/TSSK2.</text>
</comment>
<proteinExistence type="evidence at protein level"/>
<organism>
    <name type="scientific">Homo sapiens</name>
    <name type="common">Human</name>
    <dbReference type="NCBI Taxonomy" id="9606"/>
    <lineage>
        <taxon>Eukaryota</taxon>
        <taxon>Metazoa</taxon>
        <taxon>Chordata</taxon>
        <taxon>Craniata</taxon>
        <taxon>Vertebrata</taxon>
        <taxon>Euteleostomi</taxon>
        <taxon>Mammalia</taxon>
        <taxon>Eutheria</taxon>
        <taxon>Euarchontoglires</taxon>
        <taxon>Primates</taxon>
        <taxon>Haplorrhini</taxon>
        <taxon>Catarrhini</taxon>
        <taxon>Hominidae</taxon>
        <taxon>Homo</taxon>
    </lineage>
</organism>
<name>TSKS_HUMAN</name>
<gene>
    <name type="primary">TSKS</name>
    <name type="synonym">STK22S1</name>
    <name type="synonym">TSKS1</name>
</gene>
<feature type="chain" id="PRO_0000065665" description="Testis-specific serine kinase substrate">
    <location>
        <begin position="1"/>
        <end position="592"/>
    </location>
</feature>
<feature type="region of interest" description="Disordered" evidence="3">
    <location>
        <begin position="232"/>
        <end position="308"/>
    </location>
</feature>
<feature type="region of interest" description="Disordered" evidence="3">
    <location>
        <begin position="566"/>
        <end position="592"/>
    </location>
</feature>
<feature type="compositionally biased region" description="Basic and acidic residues" evidence="3">
    <location>
        <begin position="234"/>
        <end position="264"/>
    </location>
</feature>
<feature type="compositionally biased region" description="Polar residues" evidence="3">
    <location>
        <begin position="269"/>
        <end position="281"/>
    </location>
</feature>
<feature type="modified residue" description="Phosphoserine" evidence="2">
    <location>
        <position position="217"/>
    </location>
</feature>
<feature type="modified residue" description="Phosphoserine; by TSSK1 and TSSK2" evidence="1">
    <location>
        <position position="288"/>
    </location>
</feature>
<feature type="modified residue" description="Phosphoserine" evidence="2">
    <location>
        <position position="316"/>
    </location>
</feature>
<feature type="splice variant" id="VSP_009591" description="In isoform 2." evidence="8">
    <location>
        <begin position="1"/>
        <end position="200"/>
    </location>
</feature>
<feature type="splice variant" id="VSP_009592" description="In isoform 2." evidence="8">
    <original>RSVEDAEIKTNVLKQNSALLE</original>
    <variation>MGDSCPAVTFRSQKENRAGLQ</variation>
    <location>
        <begin position="201"/>
        <end position="221"/>
    </location>
</feature>
<feature type="splice variant" id="VSP_009593" description="In isoform 2." evidence="8">
    <location>
        <begin position="254"/>
        <end position="259"/>
    </location>
</feature>
<feature type="sequence variant" id="VAR_036272" description="In a colorectal cancer sample; somatic mutation; dbSNP:rs149529240." evidence="6">
    <original>G</original>
    <variation>R</variation>
    <location>
        <position position="19"/>
    </location>
</feature>
<feature type="sequence variant" id="VAR_051459" description="In dbSNP:rs34701020.">
    <original>E</original>
    <variation>K</variation>
    <location>
        <position position="167"/>
    </location>
</feature>
<feature type="sequence variant" id="VAR_051460" description="In dbSNP:rs2304202." evidence="5">
    <original>D</original>
    <variation>G</variation>
    <location>
        <position position="382"/>
    </location>
</feature>
<feature type="sequence conflict" description="In Ref. 2; AAL60464." evidence="8" ref="2">
    <original>S</original>
    <variation>G</variation>
    <location>
        <position position="272"/>
    </location>
</feature>
<accession>Q9UJT2</accession>
<accession>Q8WXJ0</accession>
<reference key="1">
    <citation type="journal article" date="2001" name="Biochem. Biophys. Res. Commun.">
        <title>Identification and characterization of a novel human testis-specific kinase substrate gene which is downregulated in testicular tumors.</title>
        <authorList>
            <person name="Scorilas A."/>
            <person name="Yousef G.M."/>
            <person name="Jung K."/>
            <person name="Rajpert-De Meyts E."/>
            <person name="Carsten S."/>
            <person name="Diamandis E.P."/>
        </authorList>
    </citation>
    <scope>NUCLEOTIDE SEQUENCE [GENOMIC DNA]</scope>
    <scope>TISSUE SPECIFICITY</scope>
</reference>
<reference key="2">
    <citation type="journal article" date="2004" name="Mol. Hum. Reprod.">
        <title>Expression analysis of the human testis-specific serine/threonine kinase (TSSK) homologues. A TSSK member is present in the equatorial segment of human sperm.</title>
        <authorList>
            <person name="Hao Z."/>
            <person name="Jha K.N."/>
            <person name="Kim Y.H."/>
            <person name="Vemuganti S."/>
            <person name="Westbrook V.A."/>
            <person name="Chertihin O."/>
            <person name="Markgraf K."/>
            <person name="Flickinger C.J."/>
            <person name="Coppola M."/>
            <person name="Herr J.C."/>
            <person name="Visconti P.E."/>
        </authorList>
    </citation>
    <scope>NUCLEOTIDE SEQUENCE [MRNA]</scope>
    <scope>PHOSPHORYLATION</scope>
    <scope>INTERACTION WITH TSSK2</scope>
    <scope>TISSUE SPECIFICITY</scope>
    <scope>VARIANT GLY-382</scope>
</reference>
<reference key="3">
    <citation type="journal article" date="2004" name="Genome Res.">
        <title>The status, quality, and expansion of the NIH full-length cDNA project: the Mammalian Gene Collection (MGC).</title>
        <authorList>
            <consortium name="The MGC Project Team"/>
        </authorList>
    </citation>
    <scope>NUCLEOTIDE SEQUENCE [LARGE SCALE MRNA]</scope>
    <source>
        <tissue>Brain</tissue>
    </source>
</reference>
<reference key="4">
    <citation type="journal article" date="2008" name="Dev. Biol.">
        <title>TSKS concentrates in spermatid centrioles during flagellogenesis.</title>
        <authorList>
            <person name="Xu B."/>
            <person name="Hao Z."/>
            <person name="Jha K.N."/>
            <person name="Zhang Z."/>
            <person name="Urekar C."/>
            <person name="Digilio L."/>
            <person name="Pulido S."/>
            <person name="Strauss J.F. III"/>
            <person name="Flickinger C.J."/>
            <person name="Herr J.C."/>
        </authorList>
    </citation>
    <scope>SUBCELLULAR LOCATION</scope>
</reference>
<reference key="5">
    <citation type="journal article" date="2006" name="Science">
        <title>The consensus coding sequences of human breast and colorectal cancers.</title>
        <authorList>
            <person name="Sjoeblom T."/>
            <person name="Jones S."/>
            <person name="Wood L.D."/>
            <person name="Parsons D.W."/>
            <person name="Lin J."/>
            <person name="Barber T.D."/>
            <person name="Mandelker D."/>
            <person name="Leary R.J."/>
            <person name="Ptak J."/>
            <person name="Silliman N."/>
            <person name="Szabo S."/>
            <person name="Buckhaults P."/>
            <person name="Farrell C."/>
            <person name="Meeh P."/>
            <person name="Markowitz S.D."/>
            <person name="Willis J."/>
            <person name="Dawson D."/>
            <person name="Willson J.K.V."/>
            <person name="Gazdar A.F."/>
            <person name="Hartigan J."/>
            <person name="Wu L."/>
            <person name="Liu C."/>
            <person name="Parmigiani G."/>
            <person name="Park B.H."/>
            <person name="Bachman K.E."/>
            <person name="Papadopoulos N."/>
            <person name="Vogelstein B."/>
            <person name="Kinzler K.W."/>
            <person name="Velculescu V.E."/>
        </authorList>
    </citation>
    <scope>VARIANT [LARGE SCALE ANALYSIS] ARG-19</scope>
</reference>